<protein>
    <recommendedName>
        <fullName>Inositol monophosphatase 2</fullName>
        <shortName>IMP 2</shortName>
        <shortName>IMPase 2</shortName>
        <ecNumber evidence="2">3.1.3.25</ecNumber>
    </recommendedName>
    <alternativeName>
        <fullName>Inositol-1(or 4)-monophosphatase 2</fullName>
    </alternativeName>
    <alternativeName>
        <fullName>Myo-inositol monophosphatase A2</fullName>
    </alternativeName>
</protein>
<keyword id="KW-0963">Cytoplasm</keyword>
<keyword id="KW-0378">Hydrolase</keyword>
<keyword id="KW-0452">Lithium</keyword>
<keyword id="KW-0460">Magnesium</keyword>
<keyword id="KW-0479">Metal-binding</keyword>
<keyword id="KW-1185">Reference proteome</keyword>
<sequence>MKPNSEEEEELVQGVGPWDECFEVAVQLALRAGQIIRKALTEEKHVSTKTSAADLVTETDHRVEDLIVSELRKRFPSHRFIAEEATASGAKCVLTHSPTWIIDPIDGTCNFVHRFPTVAVSIGFAVHQELEFGVIHHCTEERLYTGRRGQGAFCNGQRLQVSRETDLAKALVLTEIGPKRDPDTLKVFLSNMERLLHAKAHGVRVIGSSTLALCYLASGAADAYYQFGLHCWDLAAATVIIREAGGIVIDTSGGPLDLMSCRVVAAGTREMAVLIAQALQTINYGRDDEK</sequence>
<reference key="1">
    <citation type="submission" date="2002-10" db="EMBL/GenBank/DDBJ databases">
        <title>Molecular cloning and sequencing of rat Impa2.</title>
        <authorList>
            <person name="Parthasarathy L."/>
            <person name="Seelan R."/>
            <person name="Parthasarathy R."/>
        </authorList>
    </citation>
    <scope>NUCLEOTIDE SEQUENCE [MRNA]</scope>
    <source>
        <strain>Sprague-Dawley</strain>
    </source>
</reference>
<reference key="2">
    <citation type="journal article" date="2004" name="Genome Res.">
        <title>The status, quality, and expansion of the NIH full-length cDNA project: the Mammalian Gene Collection (MGC).</title>
        <authorList>
            <consortium name="The MGC Project Team"/>
        </authorList>
    </citation>
    <scope>NUCLEOTIDE SEQUENCE [LARGE SCALE MRNA]</scope>
    <source>
        <tissue>Heart</tissue>
    </source>
</reference>
<gene>
    <name type="primary">Impa2</name>
</gene>
<feature type="chain" id="PRO_0000142522" description="Inositol monophosphatase 2">
    <location>
        <begin position="1"/>
        <end position="290"/>
    </location>
</feature>
<feature type="binding site" evidence="3">
    <location>
        <position position="83"/>
    </location>
    <ligand>
        <name>Mg(2+)</name>
        <dbReference type="ChEBI" id="CHEBI:18420"/>
        <label>1</label>
    </ligand>
</feature>
<feature type="binding site" evidence="1">
    <location>
        <position position="83"/>
    </location>
    <ligand>
        <name>substrate</name>
    </ligand>
</feature>
<feature type="binding site" evidence="3">
    <location>
        <position position="103"/>
    </location>
    <ligand>
        <name>Mg(2+)</name>
        <dbReference type="ChEBI" id="CHEBI:18420"/>
        <label>1</label>
    </ligand>
</feature>
<feature type="binding site" evidence="3">
    <location>
        <position position="103"/>
    </location>
    <ligand>
        <name>Mg(2+)</name>
        <dbReference type="ChEBI" id="CHEBI:18420"/>
        <label>2</label>
    </ligand>
</feature>
<feature type="binding site" evidence="1">
    <location>
        <begin position="105"/>
        <end position="108"/>
    </location>
    <ligand>
        <name>substrate</name>
    </ligand>
</feature>
<feature type="binding site" evidence="3">
    <location>
        <position position="105"/>
    </location>
    <ligand>
        <name>Mg(2+)</name>
        <dbReference type="ChEBI" id="CHEBI:18420"/>
        <label>1</label>
    </ligand>
</feature>
<feature type="binding site" evidence="3">
    <location>
        <position position="106"/>
    </location>
    <ligand>
        <name>Mg(2+)</name>
        <dbReference type="ChEBI" id="CHEBI:18420"/>
        <label>2</label>
    </ligand>
</feature>
<feature type="binding site" evidence="1">
    <location>
        <begin position="207"/>
        <end position="209"/>
    </location>
    <ligand>
        <name>substrate</name>
    </ligand>
</feature>
<feature type="binding site" evidence="1">
    <location>
        <position position="226"/>
    </location>
    <ligand>
        <name>substrate</name>
    </ligand>
</feature>
<feature type="binding site" evidence="3">
    <location>
        <position position="233"/>
    </location>
    <ligand>
        <name>Mg(2+)</name>
        <dbReference type="ChEBI" id="CHEBI:18420"/>
        <label>2</label>
    </ligand>
</feature>
<feature type="binding site" evidence="1">
    <location>
        <position position="233"/>
    </location>
    <ligand>
        <name>substrate</name>
    </ligand>
</feature>
<evidence type="ECO:0000250" key="1"/>
<evidence type="ECO:0000250" key="2">
    <source>
        <dbReference type="UniProtKB" id="O14732"/>
    </source>
</evidence>
<evidence type="ECO:0000250" key="3">
    <source>
        <dbReference type="UniProtKB" id="P29218"/>
    </source>
</evidence>
<evidence type="ECO:0000305" key="4"/>
<dbReference type="EC" id="3.1.3.25" evidence="2"/>
<dbReference type="EMBL" id="AY160191">
    <property type="protein sequence ID" value="AAN47010.1"/>
    <property type="molecule type" value="mRNA"/>
</dbReference>
<dbReference type="EMBL" id="BC083544">
    <property type="protein sequence ID" value="AAH83544.1"/>
    <property type="molecule type" value="mRNA"/>
</dbReference>
<dbReference type="RefSeq" id="NP_757378.1">
    <property type="nucleotide sequence ID" value="NM_172224.1"/>
</dbReference>
<dbReference type="SMR" id="Q8CIN7"/>
<dbReference type="FunCoup" id="Q8CIN7">
    <property type="interactions" value="446"/>
</dbReference>
<dbReference type="STRING" id="10116.ENSRNOP00000025147"/>
<dbReference type="PhosphoSitePlus" id="Q8CIN7"/>
<dbReference type="PaxDb" id="10116-ENSRNOP00000025147"/>
<dbReference type="GeneID" id="282636"/>
<dbReference type="KEGG" id="rno:282636"/>
<dbReference type="UCSC" id="RGD:628692">
    <property type="organism name" value="rat"/>
</dbReference>
<dbReference type="AGR" id="RGD:628692"/>
<dbReference type="CTD" id="3613"/>
<dbReference type="RGD" id="628692">
    <property type="gene designation" value="Impa2"/>
</dbReference>
<dbReference type="VEuPathDB" id="HostDB:ENSRNOG00000018516"/>
<dbReference type="eggNOG" id="KOG2951">
    <property type="taxonomic scope" value="Eukaryota"/>
</dbReference>
<dbReference type="HOGENOM" id="CLU_044118_1_0_1"/>
<dbReference type="InParanoid" id="Q8CIN7"/>
<dbReference type="OrthoDB" id="6735at9989"/>
<dbReference type="PhylomeDB" id="Q8CIN7"/>
<dbReference type="TreeFam" id="TF313194"/>
<dbReference type="Reactome" id="R-RNO-1855183">
    <property type="pathway name" value="Synthesis of IP2, IP, and Ins in the cytosol"/>
</dbReference>
<dbReference type="UniPathway" id="UPA00823">
    <property type="reaction ID" value="UER00788"/>
</dbReference>
<dbReference type="PRO" id="PR:Q8CIN7"/>
<dbReference type="Proteomes" id="UP000002494">
    <property type="component" value="Chromosome 18"/>
</dbReference>
<dbReference type="Bgee" id="ENSRNOG00000018516">
    <property type="expression patterns" value="Expressed in stomach and 19 other cell types or tissues"/>
</dbReference>
<dbReference type="ExpressionAtlas" id="Q8CIN7">
    <property type="expression patterns" value="baseline and differential"/>
</dbReference>
<dbReference type="GO" id="GO:0005737">
    <property type="term" value="C:cytoplasm"/>
    <property type="evidence" value="ECO:0000266"/>
    <property type="project" value="RGD"/>
</dbReference>
<dbReference type="GO" id="GO:0008934">
    <property type="term" value="F:inositol monophosphate 1-phosphatase activity"/>
    <property type="evidence" value="ECO:0000266"/>
    <property type="project" value="RGD"/>
</dbReference>
<dbReference type="GO" id="GO:0046872">
    <property type="term" value="F:metal ion binding"/>
    <property type="evidence" value="ECO:0007669"/>
    <property type="project" value="UniProtKB-KW"/>
</dbReference>
<dbReference type="GO" id="GO:0042803">
    <property type="term" value="F:protein homodimerization activity"/>
    <property type="evidence" value="ECO:0000266"/>
    <property type="project" value="RGD"/>
</dbReference>
<dbReference type="GO" id="GO:0006021">
    <property type="term" value="P:inositol biosynthetic process"/>
    <property type="evidence" value="ECO:0007669"/>
    <property type="project" value="UniProtKB-UniPathway"/>
</dbReference>
<dbReference type="GO" id="GO:0006020">
    <property type="term" value="P:inositol metabolic process"/>
    <property type="evidence" value="ECO:0000318"/>
    <property type="project" value="GO_Central"/>
</dbReference>
<dbReference type="GO" id="GO:0046854">
    <property type="term" value="P:phosphatidylinositol phosphate biosynthetic process"/>
    <property type="evidence" value="ECO:0007669"/>
    <property type="project" value="InterPro"/>
</dbReference>
<dbReference type="GO" id="GO:0010226">
    <property type="term" value="P:response to lithium ion"/>
    <property type="evidence" value="ECO:0000266"/>
    <property type="project" value="RGD"/>
</dbReference>
<dbReference type="GO" id="GO:0007165">
    <property type="term" value="P:signal transduction"/>
    <property type="evidence" value="ECO:0000318"/>
    <property type="project" value="GO_Central"/>
</dbReference>
<dbReference type="CDD" id="cd01639">
    <property type="entry name" value="IMPase"/>
    <property type="match status" value="1"/>
</dbReference>
<dbReference type="FunFam" id="3.30.540.10:FF:000004">
    <property type="entry name" value="Inositol-1-monophosphatase"/>
    <property type="match status" value="1"/>
</dbReference>
<dbReference type="FunFam" id="3.40.190.80:FF:000002">
    <property type="entry name" value="Inositol-1-monophosphatase"/>
    <property type="match status" value="1"/>
</dbReference>
<dbReference type="Gene3D" id="3.40.190.80">
    <property type="match status" value="1"/>
</dbReference>
<dbReference type="Gene3D" id="3.30.540.10">
    <property type="entry name" value="Fructose-1,6-Bisphosphatase, subunit A, domain 1"/>
    <property type="match status" value="1"/>
</dbReference>
<dbReference type="InterPro" id="IPR033942">
    <property type="entry name" value="IMPase"/>
</dbReference>
<dbReference type="InterPro" id="IPR020583">
    <property type="entry name" value="Inositol_monoP_metal-BS"/>
</dbReference>
<dbReference type="InterPro" id="IPR020552">
    <property type="entry name" value="Inositol_monoPase_Li-sen"/>
</dbReference>
<dbReference type="InterPro" id="IPR000760">
    <property type="entry name" value="Inositol_monophosphatase-like"/>
</dbReference>
<dbReference type="InterPro" id="IPR020550">
    <property type="entry name" value="Inositol_monophosphatase_CS"/>
</dbReference>
<dbReference type="PANTHER" id="PTHR20854">
    <property type="entry name" value="INOSITOL MONOPHOSPHATASE"/>
    <property type="match status" value="1"/>
</dbReference>
<dbReference type="PANTHER" id="PTHR20854:SF29">
    <property type="entry name" value="INOSITOL MONOPHOSPHATASE 2"/>
    <property type="match status" value="1"/>
</dbReference>
<dbReference type="Pfam" id="PF00459">
    <property type="entry name" value="Inositol_P"/>
    <property type="match status" value="1"/>
</dbReference>
<dbReference type="PRINTS" id="PR00377">
    <property type="entry name" value="IMPHPHTASES"/>
</dbReference>
<dbReference type="PRINTS" id="PR00378">
    <property type="entry name" value="LIIMPHPHTASE"/>
</dbReference>
<dbReference type="SUPFAM" id="SSF56655">
    <property type="entry name" value="Carbohydrate phosphatase"/>
    <property type="match status" value="1"/>
</dbReference>
<dbReference type="PROSITE" id="PS00629">
    <property type="entry name" value="IMP_1"/>
    <property type="match status" value="1"/>
</dbReference>
<dbReference type="PROSITE" id="PS00630">
    <property type="entry name" value="IMP_2"/>
    <property type="match status" value="1"/>
</dbReference>
<organism>
    <name type="scientific">Rattus norvegicus</name>
    <name type="common">Rat</name>
    <dbReference type="NCBI Taxonomy" id="10116"/>
    <lineage>
        <taxon>Eukaryota</taxon>
        <taxon>Metazoa</taxon>
        <taxon>Chordata</taxon>
        <taxon>Craniata</taxon>
        <taxon>Vertebrata</taxon>
        <taxon>Euteleostomi</taxon>
        <taxon>Mammalia</taxon>
        <taxon>Eutheria</taxon>
        <taxon>Euarchontoglires</taxon>
        <taxon>Glires</taxon>
        <taxon>Rodentia</taxon>
        <taxon>Myomorpha</taxon>
        <taxon>Muroidea</taxon>
        <taxon>Muridae</taxon>
        <taxon>Murinae</taxon>
        <taxon>Rattus</taxon>
    </lineage>
</organism>
<accession>Q8CIN7</accession>
<proteinExistence type="evidence at transcript level"/>
<name>IMPA2_RAT</name>
<comment type="function">
    <text evidence="2">Can use myo-inositol monophosphates, scylloinositol 1,4-diphosphate, glucose-1-phosphate, beta-glycerophosphate, and 2'-AMP as substrates. Has been implicated as the pharmacological target for lithium Li(+) action in brain (By similarity).</text>
</comment>
<comment type="catalytic activity">
    <reaction evidence="2">
        <text>a myo-inositol phosphate + H2O = myo-inositol + phosphate</text>
        <dbReference type="Rhea" id="RHEA:24056"/>
        <dbReference type="ChEBI" id="CHEBI:15377"/>
        <dbReference type="ChEBI" id="CHEBI:17268"/>
        <dbReference type="ChEBI" id="CHEBI:43474"/>
        <dbReference type="ChEBI" id="CHEBI:84139"/>
        <dbReference type="EC" id="3.1.3.25"/>
    </reaction>
</comment>
<comment type="cofactor">
    <cofactor evidence="2">
        <name>Mg(2+)</name>
        <dbReference type="ChEBI" id="CHEBI:18420"/>
    </cofactor>
</comment>
<comment type="pathway">
    <text>Polyol metabolism; myo-inositol biosynthesis; myo-inositol from D-glucose 6-phosphate: step 2/2.</text>
</comment>
<comment type="subunit">
    <text evidence="2">Homodimer.</text>
</comment>
<comment type="subcellular location">
    <subcellularLocation>
        <location evidence="2">Cytoplasm</location>
    </subcellularLocation>
</comment>
<comment type="similarity">
    <text evidence="4">Belongs to the inositol monophosphatase superfamily.</text>
</comment>